<gene>
    <name evidence="1" type="primary">sgrR</name>
    <name type="ordered locus">SDY_0097</name>
</gene>
<dbReference type="EMBL" id="CP000034">
    <property type="protein sequence ID" value="ABB60333.1"/>
    <property type="molecule type" value="Genomic_DNA"/>
</dbReference>
<dbReference type="RefSeq" id="WP_001138610.1">
    <property type="nucleotide sequence ID" value="NC_007606.1"/>
</dbReference>
<dbReference type="RefSeq" id="YP_401822.1">
    <property type="nucleotide sequence ID" value="NC_007606.1"/>
</dbReference>
<dbReference type="SMR" id="Q32K24"/>
<dbReference type="STRING" id="300267.SDY_0097"/>
<dbReference type="EnsemblBacteria" id="ABB60333">
    <property type="protein sequence ID" value="ABB60333"/>
    <property type="gene ID" value="SDY_0097"/>
</dbReference>
<dbReference type="KEGG" id="sdy:SDY_0097"/>
<dbReference type="PATRIC" id="fig|300267.13.peg.115"/>
<dbReference type="HOGENOM" id="CLU_017028_12_3_6"/>
<dbReference type="Proteomes" id="UP000002716">
    <property type="component" value="Chromosome"/>
</dbReference>
<dbReference type="GO" id="GO:0003677">
    <property type="term" value="F:DNA binding"/>
    <property type="evidence" value="ECO:0007669"/>
    <property type="project" value="UniProtKB-KW"/>
</dbReference>
<dbReference type="GO" id="GO:1904680">
    <property type="term" value="F:peptide transmembrane transporter activity"/>
    <property type="evidence" value="ECO:0007669"/>
    <property type="project" value="TreeGrafter"/>
</dbReference>
<dbReference type="GO" id="GO:0045892">
    <property type="term" value="P:negative regulation of DNA-templated transcription"/>
    <property type="evidence" value="ECO:0007669"/>
    <property type="project" value="UniProtKB-UniRule"/>
</dbReference>
<dbReference type="GO" id="GO:0015833">
    <property type="term" value="P:peptide transport"/>
    <property type="evidence" value="ECO:0007669"/>
    <property type="project" value="TreeGrafter"/>
</dbReference>
<dbReference type="GO" id="GO:0045893">
    <property type="term" value="P:positive regulation of DNA-templated transcription"/>
    <property type="evidence" value="ECO:0007669"/>
    <property type="project" value="UniProtKB-UniRule"/>
</dbReference>
<dbReference type="CDD" id="cd08507">
    <property type="entry name" value="PBP2_SgrR_like"/>
    <property type="match status" value="1"/>
</dbReference>
<dbReference type="FunFam" id="3.40.190.10:FF:000070">
    <property type="entry name" value="HTH-type transcriptional regulator SgrR"/>
    <property type="match status" value="1"/>
</dbReference>
<dbReference type="Gene3D" id="3.40.190.10">
    <property type="entry name" value="Periplasmic binding protein-like II"/>
    <property type="match status" value="1"/>
</dbReference>
<dbReference type="HAMAP" id="MF_01449">
    <property type="entry name" value="HTH_type_SgrR"/>
    <property type="match status" value="1"/>
</dbReference>
<dbReference type="InterPro" id="IPR039424">
    <property type="entry name" value="SBP_5"/>
</dbReference>
<dbReference type="InterPro" id="IPR000914">
    <property type="entry name" value="SBP_5_dom"/>
</dbReference>
<dbReference type="InterPro" id="IPR025370">
    <property type="entry name" value="SgrR_HTH_N"/>
</dbReference>
<dbReference type="InterPro" id="IPR023767">
    <property type="entry name" value="Tscrpt_reg_SgrR"/>
</dbReference>
<dbReference type="NCBIfam" id="NF010149">
    <property type="entry name" value="PRK13626.1"/>
    <property type="match status" value="1"/>
</dbReference>
<dbReference type="PANTHER" id="PTHR30290:SF72">
    <property type="entry name" value="HTH-TYPE TRANSCRIPTIONAL REGULATOR SGRR"/>
    <property type="match status" value="1"/>
</dbReference>
<dbReference type="PANTHER" id="PTHR30290">
    <property type="entry name" value="PERIPLASMIC BINDING COMPONENT OF ABC TRANSPORTER"/>
    <property type="match status" value="1"/>
</dbReference>
<dbReference type="Pfam" id="PF00496">
    <property type="entry name" value="SBP_bac_5"/>
    <property type="match status" value="1"/>
</dbReference>
<dbReference type="Pfam" id="PF12793">
    <property type="entry name" value="SgrR_N"/>
    <property type="match status" value="1"/>
</dbReference>
<dbReference type="SUPFAM" id="SSF53850">
    <property type="entry name" value="Periplasmic binding protein-like II"/>
    <property type="match status" value="1"/>
</dbReference>
<accession>Q32K24</accession>
<name>SGRR_SHIDS</name>
<feature type="chain" id="PRO_0000309252" description="HTH-type transcriptional regulator SgrR">
    <location>
        <begin position="1"/>
        <end position="552"/>
    </location>
</feature>
<feature type="domain" description="HTH marR-type" evidence="1">
    <location>
        <begin position="1"/>
        <end position="116"/>
    </location>
</feature>
<feature type="DNA-binding region" description="H-T-H motif" evidence="1">
    <location>
        <begin position="26"/>
        <end position="49"/>
    </location>
</feature>
<feature type="region of interest" description="Solute-binding" evidence="1">
    <location>
        <begin position="163"/>
        <end position="492"/>
    </location>
</feature>
<reference key="1">
    <citation type="journal article" date="2005" name="Nucleic Acids Res.">
        <title>Genome dynamics and diversity of Shigella species, the etiologic agents of bacillary dysentery.</title>
        <authorList>
            <person name="Yang F."/>
            <person name="Yang J."/>
            <person name="Zhang X."/>
            <person name="Chen L."/>
            <person name="Jiang Y."/>
            <person name="Yan Y."/>
            <person name="Tang X."/>
            <person name="Wang J."/>
            <person name="Xiong Z."/>
            <person name="Dong J."/>
            <person name="Xue Y."/>
            <person name="Zhu Y."/>
            <person name="Xu X."/>
            <person name="Sun L."/>
            <person name="Chen S."/>
            <person name="Nie H."/>
            <person name="Peng J."/>
            <person name="Xu J."/>
            <person name="Wang Y."/>
            <person name="Yuan Z."/>
            <person name="Wen Y."/>
            <person name="Yao Z."/>
            <person name="Shen Y."/>
            <person name="Qiang B."/>
            <person name="Hou Y."/>
            <person name="Yu J."/>
            <person name="Jin Q."/>
        </authorList>
    </citation>
    <scope>NUCLEOTIDE SEQUENCE [LARGE SCALE GENOMIC DNA]</scope>
    <source>
        <strain>Sd197</strain>
    </source>
</reference>
<evidence type="ECO:0000255" key="1">
    <source>
        <dbReference type="HAMAP-Rule" id="MF_01449"/>
    </source>
</evidence>
<proteinExistence type="inferred from homology"/>
<keyword id="KW-0010">Activator</keyword>
<keyword id="KW-0238">DNA-binding</keyword>
<keyword id="KW-1185">Reference proteome</keyword>
<keyword id="KW-0678">Repressor</keyword>
<keyword id="KW-0804">Transcription</keyword>
<keyword id="KW-0805">Transcription regulation</keyword>
<comment type="function">
    <text evidence="1">Activates the small RNA gene sgrS under glucose-phosphate stress conditions as well as yfdZ. Represses its own transcription under both stress and non-stress conditions. Might act as a sensor of the intracellular accumulation of phosphoglucose by binding these molecules in its C-terminal solute-binding domain.</text>
</comment>
<organism>
    <name type="scientific">Shigella dysenteriae serotype 1 (strain Sd197)</name>
    <dbReference type="NCBI Taxonomy" id="300267"/>
    <lineage>
        <taxon>Bacteria</taxon>
        <taxon>Pseudomonadati</taxon>
        <taxon>Pseudomonadota</taxon>
        <taxon>Gammaproteobacteria</taxon>
        <taxon>Enterobacterales</taxon>
        <taxon>Enterobacteriaceae</taxon>
        <taxon>Shigella</taxon>
    </lineage>
</organism>
<protein>
    <recommendedName>
        <fullName evidence="1">HTH-type transcriptional regulator SgrR</fullName>
    </recommendedName>
</protein>
<sequence>MPSARLQQQFIRLWQCCEGKSQDTTLNELAALLSCSRRHMRTLLNTMQDRGWLTWEAEVGRGKRSRLIFLYTGLALQQQRAEDLLEQDRIDQLVQLVGDKATVRQMLVSHLGRSFRQGRHILRVLYYRPLRNLLPGSALRRSETHIARQIFSSLTRINEANGELEADIAHHWQQISPLHWRFFLRPGVHFHHGRELEMDDVIASFKRINTLPLYSHIADIVSPTPWTLDIHLTQPDRWLPLLLGQVPAMILPREWETLSNFASHPIGTGPYAVIRNSTNQLKIQAFDDFFGYRALIDEVNVWVLPEIADEPAGGLMLKGPQGEEKEIESRLEEGCYYLLFDSRTHRGANQQVRDWVSYVLSPTNLVYFAEEQYQQLWFPAYGLLPRWHHARTIKSEKPAGLESLTLTFYQDHSEHRVIAGIMQQILASHQVTLEIKEISYDQWHEGEIESDIWLNSANFTLPLDFSLFAHLCEVPLLQHCIPIDWQADAARWRNGEMNLANWCQQLVASKAMVPLIHHWLIIQGQRSMRGLRMNTLGWFDFKSAWFAPPDPE</sequence>